<organism evidence="6">
    <name type="scientific">Caenorhabditis elegans</name>
    <dbReference type="NCBI Taxonomy" id="6239"/>
    <lineage>
        <taxon>Eukaryota</taxon>
        <taxon>Metazoa</taxon>
        <taxon>Ecdysozoa</taxon>
        <taxon>Nematoda</taxon>
        <taxon>Chromadorea</taxon>
        <taxon>Rhabditida</taxon>
        <taxon>Rhabditina</taxon>
        <taxon>Rhabditomorpha</taxon>
        <taxon>Rhabditoidea</taxon>
        <taxon>Rhabditidae</taxon>
        <taxon>Peloderinae</taxon>
        <taxon>Caenorhabditis</taxon>
    </lineage>
</organism>
<protein>
    <recommendedName>
        <fullName evidence="5">Zinc finger protein sdz-12</fullName>
    </recommendedName>
    <alternativeName>
        <fullName evidence="7">Skn-1-dependent zygotic transcript 12 protein</fullName>
    </alternativeName>
</protein>
<keyword id="KW-0479">Metal-binding</keyword>
<keyword id="KW-1185">Reference proteome</keyword>
<keyword id="KW-0677">Repeat</keyword>
<keyword id="KW-0862">Zinc</keyword>
<keyword id="KW-0863">Zinc-finger</keyword>
<proteinExistence type="evidence at transcript level"/>
<dbReference type="EMBL" id="BX284602">
    <property type="protein sequence ID" value="CCD67483.1"/>
    <property type="molecule type" value="Genomic_DNA"/>
</dbReference>
<dbReference type="RefSeq" id="NP_494634.1">
    <property type="nucleotide sequence ID" value="NM_062233.2"/>
</dbReference>
<dbReference type="IntAct" id="Q9BLC4">
    <property type="interactions" value="17"/>
</dbReference>
<dbReference type="STRING" id="6239.F12E12.5.1"/>
<dbReference type="PaxDb" id="6239-F12E12.5"/>
<dbReference type="EnsemblMetazoa" id="F12E12.5.1">
    <property type="protein sequence ID" value="F12E12.5.1"/>
    <property type="gene ID" value="WBGene00017406"/>
</dbReference>
<dbReference type="GeneID" id="184388"/>
<dbReference type="KEGG" id="cel:CELE_F12E12.5"/>
<dbReference type="UCSC" id="F12E12.5">
    <property type="organism name" value="c. elegans"/>
</dbReference>
<dbReference type="AGR" id="WB:WBGene00017406"/>
<dbReference type="CTD" id="184388"/>
<dbReference type="WormBase" id="F12E12.5">
    <property type="protein sequence ID" value="CE20674"/>
    <property type="gene ID" value="WBGene00017406"/>
    <property type="gene designation" value="sdz-12"/>
</dbReference>
<dbReference type="eggNOG" id="KOG1721">
    <property type="taxonomic scope" value="Eukaryota"/>
</dbReference>
<dbReference type="GeneTree" id="ENSGT00720000109290"/>
<dbReference type="HOGENOM" id="CLU_016943_0_0_1"/>
<dbReference type="InParanoid" id="Q9BLC4"/>
<dbReference type="OMA" id="ANLCHEC"/>
<dbReference type="OrthoDB" id="6077919at2759"/>
<dbReference type="PhylomeDB" id="Q9BLC4"/>
<dbReference type="PRO" id="PR:Q9BLC4"/>
<dbReference type="Proteomes" id="UP000001940">
    <property type="component" value="Chromosome II"/>
</dbReference>
<dbReference type="Bgee" id="WBGene00017406">
    <property type="expression patterns" value="Expressed in embryo and 1 other cell type or tissue"/>
</dbReference>
<dbReference type="GO" id="GO:0003700">
    <property type="term" value="F:DNA-binding transcription factor activity"/>
    <property type="evidence" value="ECO:0000318"/>
    <property type="project" value="GO_Central"/>
</dbReference>
<dbReference type="GO" id="GO:0000978">
    <property type="term" value="F:RNA polymerase II cis-regulatory region sequence-specific DNA binding"/>
    <property type="evidence" value="ECO:0000318"/>
    <property type="project" value="GO_Central"/>
</dbReference>
<dbReference type="GO" id="GO:0008270">
    <property type="term" value="F:zinc ion binding"/>
    <property type="evidence" value="ECO:0007669"/>
    <property type="project" value="UniProtKB-KW"/>
</dbReference>
<dbReference type="GO" id="GO:0006357">
    <property type="term" value="P:regulation of transcription by RNA polymerase II"/>
    <property type="evidence" value="ECO:0000318"/>
    <property type="project" value="GO_Central"/>
</dbReference>
<dbReference type="FunFam" id="3.30.160.60:FF:004144">
    <property type="match status" value="1"/>
</dbReference>
<dbReference type="Gene3D" id="3.30.160.60">
    <property type="entry name" value="Classic Zinc Finger"/>
    <property type="match status" value="3"/>
</dbReference>
<dbReference type="InterPro" id="IPR036236">
    <property type="entry name" value="Znf_C2H2_sf"/>
</dbReference>
<dbReference type="InterPro" id="IPR013087">
    <property type="entry name" value="Znf_C2H2_type"/>
</dbReference>
<dbReference type="PANTHER" id="PTHR24379:SF121">
    <property type="entry name" value="C2H2-TYPE DOMAIN-CONTAINING PROTEIN"/>
    <property type="match status" value="1"/>
</dbReference>
<dbReference type="PANTHER" id="PTHR24379">
    <property type="entry name" value="KRAB AND ZINC FINGER DOMAIN-CONTAINING"/>
    <property type="match status" value="1"/>
</dbReference>
<dbReference type="Pfam" id="PF00096">
    <property type="entry name" value="zf-C2H2"/>
    <property type="match status" value="1"/>
</dbReference>
<dbReference type="Pfam" id="PF12874">
    <property type="entry name" value="zf-met"/>
    <property type="match status" value="2"/>
</dbReference>
<dbReference type="SMART" id="SM00355">
    <property type="entry name" value="ZnF_C2H2"/>
    <property type="match status" value="7"/>
</dbReference>
<dbReference type="SUPFAM" id="SSF57667">
    <property type="entry name" value="beta-beta-alpha zinc fingers"/>
    <property type="match status" value="2"/>
</dbReference>
<dbReference type="PROSITE" id="PS00028">
    <property type="entry name" value="ZINC_FINGER_C2H2_1"/>
    <property type="match status" value="6"/>
</dbReference>
<dbReference type="PROSITE" id="PS50157">
    <property type="entry name" value="ZINC_FINGER_C2H2_2"/>
    <property type="match status" value="2"/>
</dbReference>
<name>SDZ12_CAEEL</name>
<feature type="chain" id="PRO_5004324336" description="Zinc finger protein sdz-12">
    <location>
        <begin position="1"/>
        <end position="330"/>
    </location>
</feature>
<feature type="zinc finger region" description="C2H2-type 1" evidence="1">
    <location>
        <begin position="27"/>
        <end position="48"/>
    </location>
</feature>
<feature type="zinc finger region" description="C2H2-type 2" evidence="1">
    <location>
        <begin position="63"/>
        <end position="85"/>
    </location>
</feature>
<feature type="zinc finger region" description="C2H2-type 3" evidence="1">
    <location>
        <begin position="91"/>
        <end position="113"/>
    </location>
</feature>
<feature type="zinc finger region" description="C2H2-type 4" evidence="1">
    <location>
        <begin position="120"/>
        <end position="144"/>
    </location>
</feature>
<feature type="zinc finger region" description="C2H2-type 5" evidence="1">
    <location>
        <begin position="153"/>
        <end position="176"/>
    </location>
</feature>
<feature type="zinc finger region" description="C2H2-type 6" evidence="1">
    <location>
        <begin position="271"/>
        <end position="293"/>
    </location>
</feature>
<feature type="region of interest" description="Disordered" evidence="2">
    <location>
        <begin position="183"/>
        <end position="203"/>
    </location>
</feature>
<feature type="compositionally biased region" description="Low complexity" evidence="2">
    <location>
        <begin position="183"/>
        <end position="195"/>
    </location>
</feature>
<reference evidence="6" key="1">
    <citation type="journal article" date="1998" name="Science">
        <title>Genome sequence of the nematode C. elegans: a platform for investigating biology.</title>
        <authorList>
            <consortium name="The C. elegans sequencing consortium"/>
        </authorList>
    </citation>
    <scope>NUCLEOTIDE SEQUENCE [LARGE SCALE GENOMIC DNA]</scope>
    <source>
        <strain evidence="6">Bristol N2</strain>
    </source>
</reference>
<reference evidence="5" key="2">
    <citation type="journal article" date="2010" name="Dev. Biol.">
        <title>hunchback and Ikaros-like zinc finger genes control reproductive system development in Caenorhabditis elegans.</title>
        <authorList>
            <person name="Large E.E."/>
            <person name="Mathies L.D."/>
        </authorList>
    </citation>
    <scope>FUNCTION</scope>
    <scope>TISSUE SPECIFICITY</scope>
    <scope>DEVELOPMENTAL STAGE</scope>
    <scope>DISRUPTION PHENOTYPE</scope>
</reference>
<evidence type="ECO:0000255" key="1">
    <source>
        <dbReference type="PROSITE-ProRule" id="PRU00042"/>
    </source>
</evidence>
<evidence type="ECO:0000256" key="2">
    <source>
        <dbReference type="SAM" id="MobiDB-lite"/>
    </source>
</evidence>
<evidence type="ECO:0000269" key="3">
    <source>
    </source>
</evidence>
<evidence type="ECO:0000303" key="4">
    <source>
    </source>
</evidence>
<evidence type="ECO:0000305" key="5"/>
<evidence type="ECO:0000312" key="6">
    <source>
        <dbReference type="Proteomes" id="UP000001940"/>
    </source>
</evidence>
<evidence type="ECO:0000312" key="7">
    <source>
        <dbReference type="WormBase" id="F12E12.5"/>
    </source>
</evidence>
<accession>Q9BLC4</accession>
<gene>
    <name evidence="4 7" type="primary">sdz-12</name>
    <name evidence="7" type="ORF">F12E12.5</name>
</gene>
<sequence>MSLSSLDAVLSLIATSSTLDQDSAKVPQCQVCKRKFANQKTLRTHMKHITCRPGRSNVVNHKFRCENCEKQFTNKPNLKRHQITHSGSKSKKCSTCQRTFFREDQLQRHLHNHLKERSHFDCPVLNCSMQFVFYEGVENHLVNHHHFSYSESAPCGKCHKLFGSPRHLLVHYHFDHKEALRSSAPAPTSSARLSPITVSTSGSPRAQLAISPQEKPPQKLSINLGTSPMIEEFCEQNSATLPNTDQQLSPTLSPNEPRFRNLITSEPTPSFECKHCTIKFHDATMSIMHNALHAPGSPFKCAICGAECGNKIVFTMHIITASHDFGGIGT</sequence>
<comment type="function">
    <text evidence="3">Together with ehn-3, may play a role in gonadogenesis.</text>
</comment>
<comment type="tissue specificity">
    <text evidence="3">Expressed in the somatic gonad.</text>
</comment>
<comment type="developmental stage">
    <text evidence="3">In the early larval stage of development, expressed in Z1.pa and Z4.ap distal tip cells and their descendants (PubMed:20026024). Not expressed in early embryos (PubMed:20026024).</text>
</comment>
<comment type="disruption phenotype">
    <text evidence="3">RNAi-mediated knockdown does not cause defects in somatic gonad development (PubMed:20026024). RNAi-mediated knockdown in a ehn-3 rd2 mutant background enhances the defects in gonadal development in the ehn-3 single mutant (PubMed:20026024).</text>
</comment>
<comment type="similarity">
    <text evidence="5">Belongs to the krueppel C2H2-type zinc-finger protein family.</text>
</comment>